<sequence length="155" mass="16401">MTIYEGTYIGSGLRIAIVVSRWNDLITNRLLEGARDGLLRHGVAADHIDIAWVPGSFELPLVCHRLAESSRYDAIIALGAVIRGATTHHEHVAAAASSGIAQVSLQTGVPCIFGVITTDNIEQAIERAGTKAGNKGFEAATAAIEMATLLQRLNG</sequence>
<gene>
    <name evidence="1" type="primary">ribH</name>
    <name type="ordered locus">Caur_2202</name>
</gene>
<comment type="function">
    <text evidence="1">Catalyzes the formation of 6,7-dimethyl-8-ribityllumazine by condensation of 5-amino-6-(D-ribitylamino)uracil with 3,4-dihydroxy-2-butanone 4-phosphate. This is the penultimate step in the biosynthesis of riboflavin.</text>
</comment>
<comment type="catalytic activity">
    <reaction evidence="1">
        <text>(2S)-2-hydroxy-3-oxobutyl phosphate + 5-amino-6-(D-ribitylamino)uracil = 6,7-dimethyl-8-(1-D-ribityl)lumazine + phosphate + 2 H2O + H(+)</text>
        <dbReference type="Rhea" id="RHEA:26152"/>
        <dbReference type="ChEBI" id="CHEBI:15377"/>
        <dbReference type="ChEBI" id="CHEBI:15378"/>
        <dbReference type="ChEBI" id="CHEBI:15934"/>
        <dbReference type="ChEBI" id="CHEBI:43474"/>
        <dbReference type="ChEBI" id="CHEBI:58201"/>
        <dbReference type="ChEBI" id="CHEBI:58830"/>
        <dbReference type="EC" id="2.5.1.78"/>
    </reaction>
</comment>
<comment type="pathway">
    <text evidence="1">Cofactor biosynthesis; riboflavin biosynthesis; riboflavin from 2-hydroxy-3-oxobutyl phosphate and 5-amino-6-(D-ribitylamino)uracil: step 1/2.</text>
</comment>
<comment type="similarity">
    <text evidence="1">Belongs to the DMRL synthase family.</text>
</comment>
<evidence type="ECO:0000255" key="1">
    <source>
        <dbReference type="HAMAP-Rule" id="MF_00178"/>
    </source>
</evidence>
<accession>A9WFR1</accession>
<reference key="1">
    <citation type="journal article" date="2011" name="BMC Genomics">
        <title>Complete genome sequence of the filamentous anoxygenic phototrophic bacterium Chloroflexus aurantiacus.</title>
        <authorList>
            <person name="Tang K.H."/>
            <person name="Barry K."/>
            <person name="Chertkov O."/>
            <person name="Dalin E."/>
            <person name="Han C.S."/>
            <person name="Hauser L.J."/>
            <person name="Honchak B.M."/>
            <person name="Karbach L.E."/>
            <person name="Land M.L."/>
            <person name="Lapidus A."/>
            <person name="Larimer F.W."/>
            <person name="Mikhailova N."/>
            <person name="Pitluck S."/>
            <person name="Pierson B.K."/>
            <person name="Blankenship R.E."/>
        </authorList>
    </citation>
    <scope>NUCLEOTIDE SEQUENCE [LARGE SCALE GENOMIC DNA]</scope>
    <source>
        <strain>ATCC 29366 / DSM 635 / J-10-fl</strain>
    </source>
</reference>
<organism>
    <name type="scientific">Chloroflexus aurantiacus (strain ATCC 29366 / DSM 635 / J-10-fl)</name>
    <dbReference type="NCBI Taxonomy" id="324602"/>
    <lineage>
        <taxon>Bacteria</taxon>
        <taxon>Bacillati</taxon>
        <taxon>Chloroflexota</taxon>
        <taxon>Chloroflexia</taxon>
        <taxon>Chloroflexales</taxon>
        <taxon>Chloroflexineae</taxon>
        <taxon>Chloroflexaceae</taxon>
        <taxon>Chloroflexus</taxon>
    </lineage>
</organism>
<keyword id="KW-1185">Reference proteome</keyword>
<keyword id="KW-0686">Riboflavin biosynthesis</keyword>
<keyword id="KW-0808">Transferase</keyword>
<protein>
    <recommendedName>
        <fullName evidence="1">6,7-dimethyl-8-ribityllumazine synthase</fullName>
        <shortName evidence="1">DMRL synthase</shortName>
        <shortName evidence="1">LS</shortName>
        <shortName evidence="1">Lumazine synthase</shortName>
        <ecNumber evidence="1">2.5.1.78</ecNumber>
    </recommendedName>
</protein>
<proteinExistence type="inferred from homology"/>
<name>RISB_CHLAA</name>
<feature type="chain" id="PRO_1000077227" description="6,7-dimethyl-8-ribityllumazine synthase">
    <location>
        <begin position="1"/>
        <end position="155"/>
    </location>
</feature>
<feature type="active site" description="Proton donor" evidence="1">
    <location>
        <position position="88"/>
    </location>
</feature>
<feature type="binding site" evidence="1">
    <location>
        <position position="22"/>
    </location>
    <ligand>
        <name>5-amino-6-(D-ribitylamino)uracil</name>
        <dbReference type="ChEBI" id="CHEBI:15934"/>
    </ligand>
</feature>
<feature type="binding site" evidence="1">
    <location>
        <begin position="56"/>
        <end position="58"/>
    </location>
    <ligand>
        <name>5-amino-6-(D-ribitylamino)uracil</name>
        <dbReference type="ChEBI" id="CHEBI:15934"/>
    </ligand>
</feature>
<feature type="binding site" evidence="1">
    <location>
        <begin position="80"/>
        <end position="82"/>
    </location>
    <ligand>
        <name>5-amino-6-(D-ribitylamino)uracil</name>
        <dbReference type="ChEBI" id="CHEBI:15934"/>
    </ligand>
</feature>
<feature type="binding site" evidence="1">
    <location>
        <begin position="85"/>
        <end position="86"/>
    </location>
    <ligand>
        <name>(2S)-2-hydroxy-3-oxobutyl phosphate</name>
        <dbReference type="ChEBI" id="CHEBI:58830"/>
    </ligand>
</feature>
<feature type="binding site" evidence="1">
    <location>
        <position position="113"/>
    </location>
    <ligand>
        <name>5-amino-6-(D-ribitylamino)uracil</name>
        <dbReference type="ChEBI" id="CHEBI:15934"/>
    </ligand>
</feature>
<feature type="binding site" evidence="1">
    <location>
        <position position="127"/>
    </location>
    <ligand>
        <name>(2S)-2-hydroxy-3-oxobutyl phosphate</name>
        <dbReference type="ChEBI" id="CHEBI:58830"/>
    </ligand>
</feature>
<dbReference type="EC" id="2.5.1.78" evidence="1"/>
<dbReference type="EMBL" id="CP000909">
    <property type="protein sequence ID" value="ABY35411.1"/>
    <property type="molecule type" value="Genomic_DNA"/>
</dbReference>
<dbReference type="RefSeq" id="YP_001635800.1">
    <property type="nucleotide sequence ID" value="NC_010175.1"/>
</dbReference>
<dbReference type="SMR" id="A9WFR1"/>
<dbReference type="FunCoup" id="A9WFR1">
    <property type="interactions" value="476"/>
</dbReference>
<dbReference type="STRING" id="324602.Caur_2202"/>
<dbReference type="EnsemblBacteria" id="ABY35411">
    <property type="protein sequence ID" value="ABY35411"/>
    <property type="gene ID" value="Caur_2202"/>
</dbReference>
<dbReference type="KEGG" id="cau:Caur_2202"/>
<dbReference type="PATRIC" id="fig|324602.8.peg.2495"/>
<dbReference type="eggNOG" id="COG0054">
    <property type="taxonomic scope" value="Bacteria"/>
</dbReference>
<dbReference type="HOGENOM" id="CLU_089358_1_1_0"/>
<dbReference type="InParanoid" id="A9WFR1"/>
<dbReference type="UniPathway" id="UPA00275">
    <property type="reaction ID" value="UER00404"/>
</dbReference>
<dbReference type="Proteomes" id="UP000002008">
    <property type="component" value="Chromosome"/>
</dbReference>
<dbReference type="GO" id="GO:0005737">
    <property type="term" value="C:cytoplasm"/>
    <property type="evidence" value="ECO:0000318"/>
    <property type="project" value="GO_Central"/>
</dbReference>
<dbReference type="GO" id="GO:0005829">
    <property type="term" value="C:cytosol"/>
    <property type="evidence" value="ECO:0000318"/>
    <property type="project" value="GO_Central"/>
</dbReference>
<dbReference type="GO" id="GO:0009349">
    <property type="term" value="C:riboflavin synthase complex"/>
    <property type="evidence" value="ECO:0007669"/>
    <property type="project" value="InterPro"/>
</dbReference>
<dbReference type="GO" id="GO:0000906">
    <property type="term" value="F:6,7-dimethyl-8-ribityllumazine synthase activity"/>
    <property type="evidence" value="ECO:0000318"/>
    <property type="project" value="GO_Central"/>
</dbReference>
<dbReference type="GO" id="GO:0009231">
    <property type="term" value="P:riboflavin biosynthetic process"/>
    <property type="evidence" value="ECO:0000318"/>
    <property type="project" value="GO_Central"/>
</dbReference>
<dbReference type="CDD" id="cd09209">
    <property type="entry name" value="Lumazine_synthase-I"/>
    <property type="match status" value="1"/>
</dbReference>
<dbReference type="FunFam" id="3.40.50.960:FF:000001">
    <property type="entry name" value="6,7-dimethyl-8-ribityllumazine synthase"/>
    <property type="match status" value="1"/>
</dbReference>
<dbReference type="Gene3D" id="3.40.50.960">
    <property type="entry name" value="Lumazine/riboflavin synthase"/>
    <property type="match status" value="1"/>
</dbReference>
<dbReference type="HAMAP" id="MF_00178">
    <property type="entry name" value="Lumazine_synth"/>
    <property type="match status" value="1"/>
</dbReference>
<dbReference type="InterPro" id="IPR034964">
    <property type="entry name" value="LS"/>
</dbReference>
<dbReference type="InterPro" id="IPR002180">
    <property type="entry name" value="LS/RS"/>
</dbReference>
<dbReference type="InterPro" id="IPR036467">
    <property type="entry name" value="LS/RS_sf"/>
</dbReference>
<dbReference type="NCBIfam" id="TIGR00114">
    <property type="entry name" value="lumazine-synth"/>
    <property type="match status" value="1"/>
</dbReference>
<dbReference type="NCBIfam" id="NF000812">
    <property type="entry name" value="PRK00061.1-4"/>
    <property type="match status" value="1"/>
</dbReference>
<dbReference type="PANTHER" id="PTHR21058:SF0">
    <property type="entry name" value="6,7-DIMETHYL-8-RIBITYLLUMAZINE SYNTHASE"/>
    <property type="match status" value="1"/>
</dbReference>
<dbReference type="PANTHER" id="PTHR21058">
    <property type="entry name" value="6,7-DIMETHYL-8-RIBITYLLUMAZINE SYNTHASE DMRL SYNTHASE LUMAZINE SYNTHASE"/>
    <property type="match status" value="1"/>
</dbReference>
<dbReference type="Pfam" id="PF00885">
    <property type="entry name" value="DMRL_synthase"/>
    <property type="match status" value="1"/>
</dbReference>
<dbReference type="SUPFAM" id="SSF52121">
    <property type="entry name" value="Lumazine synthase"/>
    <property type="match status" value="1"/>
</dbReference>